<organism>
    <name type="scientific">Clostridium botulinum (strain 657 / Type Ba4)</name>
    <dbReference type="NCBI Taxonomy" id="515621"/>
    <lineage>
        <taxon>Bacteria</taxon>
        <taxon>Bacillati</taxon>
        <taxon>Bacillota</taxon>
        <taxon>Clostridia</taxon>
        <taxon>Eubacteriales</taxon>
        <taxon>Clostridiaceae</taxon>
        <taxon>Clostridium</taxon>
    </lineage>
</organism>
<keyword id="KW-0066">ATP synthesis</keyword>
<keyword id="KW-0067">ATP-binding</keyword>
<keyword id="KW-1003">Cell membrane</keyword>
<keyword id="KW-0139">CF(1)</keyword>
<keyword id="KW-0375">Hydrogen ion transport</keyword>
<keyword id="KW-0406">Ion transport</keyword>
<keyword id="KW-0472">Membrane</keyword>
<keyword id="KW-0547">Nucleotide-binding</keyword>
<keyword id="KW-1278">Translocase</keyword>
<keyword id="KW-0813">Transport</keyword>
<protein>
    <recommendedName>
        <fullName evidence="1">ATP synthase subunit beta</fullName>
        <ecNumber evidence="1">7.1.2.2</ecNumber>
    </recommendedName>
    <alternativeName>
        <fullName evidence="1">ATP synthase F1 sector subunit beta</fullName>
    </alternativeName>
    <alternativeName>
        <fullName evidence="1">F-ATPase subunit beta</fullName>
    </alternativeName>
</protein>
<dbReference type="EC" id="7.1.2.2" evidence="1"/>
<dbReference type="EMBL" id="CP001083">
    <property type="protein sequence ID" value="ACQ51707.1"/>
    <property type="molecule type" value="Genomic_DNA"/>
</dbReference>
<dbReference type="SMR" id="C3KYJ3"/>
<dbReference type="KEGG" id="cbi:CLJ_B0195"/>
<dbReference type="HOGENOM" id="CLU_022398_0_2_9"/>
<dbReference type="Proteomes" id="UP000002333">
    <property type="component" value="Chromosome"/>
</dbReference>
<dbReference type="GO" id="GO:0005886">
    <property type="term" value="C:plasma membrane"/>
    <property type="evidence" value="ECO:0007669"/>
    <property type="project" value="UniProtKB-SubCell"/>
</dbReference>
<dbReference type="GO" id="GO:0045259">
    <property type="term" value="C:proton-transporting ATP synthase complex"/>
    <property type="evidence" value="ECO:0007669"/>
    <property type="project" value="UniProtKB-KW"/>
</dbReference>
<dbReference type="GO" id="GO:0005524">
    <property type="term" value="F:ATP binding"/>
    <property type="evidence" value="ECO:0007669"/>
    <property type="project" value="UniProtKB-UniRule"/>
</dbReference>
<dbReference type="GO" id="GO:0016887">
    <property type="term" value="F:ATP hydrolysis activity"/>
    <property type="evidence" value="ECO:0007669"/>
    <property type="project" value="InterPro"/>
</dbReference>
<dbReference type="GO" id="GO:0046933">
    <property type="term" value="F:proton-transporting ATP synthase activity, rotational mechanism"/>
    <property type="evidence" value="ECO:0007669"/>
    <property type="project" value="UniProtKB-UniRule"/>
</dbReference>
<dbReference type="CDD" id="cd18110">
    <property type="entry name" value="ATP-synt_F1_beta_C"/>
    <property type="match status" value="1"/>
</dbReference>
<dbReference type="CDD" id="cd18115">
    <property type="entry name" value="ATP-synt_F1_beta_N"/>
    <property type="match status" value="1"/>
</dbReference>
<dbReference type="CDD" id="cd01133">
    <property type="entry name" value="F1-ATPase_beta_CD"/>
    <property type="match status" value="1"/>
</dbReference>
<dbReference type="FunFam" id="1.10.1140.10:FF:000001">
    <property type="entry name" value="ATP synthase subunit beta"/>
    <property type="match status" value="1"/>
</dbReference>
<dbReference type="FunFam" id="3.40.50.300:FF:000026">
    <property type="entry name" value="ATP synthase subunit beta"/>
    <property type="match status" value="1"/>
</dbReference>
<dbReference type="Gene3D" id="2.40.10.170">
    <property type="match status" value="1"/>
</dbReference>
<dbReference type="Gene3D" id="1.10.1140.10">
    <property type="entry name" value="Bovine Mitochondrial F1-atpase, Atp Synthase Beta Chain, Chain D, domain 3"/>
    <property type="match status" value="1"/>
</dbReference>
<dbReference type="Gene3D" id="3.40.50.300">
    <property type="entry name" value="P-loop containing nucleotide triphosphate hydrolases"/>
    <property type="match status" value="1"/>
</dbReference>
<dbReference type="HAMAP" id="MF_01347">
    <property type="entry name" value="ATP_synth_beta_bact"/>
    <property type="match status" value="1"/>
</dbReference>
<dbReference type="InterPro" id="IPR003593">
    <property type="entry name" value="AAA+_ATPase"/>
</dbReference>
<dbReference type="InterPro" id="IPR055190">
    <property type="entry name" value="ATP-synt_VA_C"/>
</dbReference>
<dbReference type="InterPro" id="IPR005722">
    <property type="entry name" value="ATP_synth_F1_bsu"/>
</dbReference>
<dbReference type="InterPro" id="IPR020003">
    <property type="entry name" value="ATPase_a/bsu_AS"/>
</dbReference>
<dbReference type="InterPro" id="IPR050053">
    <property type="entry name" value="ATPase_alpha/beta_chains"/>
</dbReference>
<dbReference type="InterPro" id="IPR004100">
    <property type="entry name" value="ATPase_F1/V1/A1_a/bsu_N"/>
</dbReference>
<dbReference type="InterPro" id="IPR036121">
    <property type="entry name" value="ATPase_F1/V1/A1_a/bsu_N_sf"/>
</dbReference>
<dbReference type="InterPro" id="IPR000194">
    <property type="entry name" value="ATPase_F1/V1/A1_a/bsu_nucl-bd"/>
</dbReference>
<dbReference type="InterPro" id="IPR024034">
    <property type="entry name" value="ATPase_F1/V1_b/a_C"/>
</dbReference>
<dbReference type="InterPro" id="IPR027417">
    <property type="entry name" value="P-loop_NTPase"/>
</dbReference>
<dbReference type="NCBIfam" id="TIGR01039">
    <property type="entry name" value="atpD"/>
    <property type="match status" value="1"/>
</dbReference>
<dbReference type="PANTHER" id="PTHR15184">
    <property type="entry name" value="ATP SYNTHASE"/>
    <property type="match status" value="1"/>
</dbReference>
<dbReference type="PANTHER" id="PTHR15184:SF71">
    <property type="entry name" value="ATP SYNTHASE SUBUNIT BETA, MITOCHONDRIAL"/>
    <property type="match status" value="1"/>
</dbReference>
<dbReference type="Pfam" id="PF00006">
    <property type="entry name" value="ATP-synt_ab"/>
    <property type="match status" value="1"/>
</dbReference>
<dbReference type="Pfam" id="PF02874">
    <property type="entry name" value="ATP-synt_ab_N"/>
    <property type="match status" value="1"/>
</dbReference>
<dbReference type="Pfam" id="PF22919">
    <property type="entry name" value="ATP-synt_VA_C"/>
    <property type="match status" value="1"/>
</dbReference>
<dbReference type="SMART" id="SM00382">
    <property type="entry name" value="AAA"/>
    <property type="match status" value="1"/>
</dbReference>
<dbReference type="SUPFAM" id="SSF47917">
    <property type="entry name" value="C-terminal domain of alpha and beta subunits of F1 ATP synthase"/>
    <property type="match status" value="1"/>
</dbReference>
<dbReference type="SUPFAM" id="SSF50615">
    <property type="entry name" value="N-terminal domain of alpha and beta subunits of F1 ATP synthase"/>
    <property type="match status" value="1"/>
</dbReference>
<dbReference type="SUPFAM" id="SSF52540">
    <property type="entry name" value="P-loop containing nucleoside triphosphate hydrolases"/>
    <property type="match status" value="1"/>
</dbReference>
<dbReference type="PROSITE" id="PS00152">
    <property type="entry name" value="ATPASE_ALPHA_BETA"/>
    <property type="match status" value="1"/>
</dbReference>
<reference key="1">
    <citation type="submission" date="2008-05" db="EMBL/GenBank/DDBJ databases">
        <title>Genome sequence of Clostridium botulinum Ba4 strain 657.</title>
        <authorList>
            <person name="Shrivastava S."/>
            <person name="Brown J.L."/>
            <person name="Bruce D."/>
            <person name="Detter C."/>
            <person name="Munk C."/>
            <person name="Smith L.A."/>
            <person name="Smith T.J."/>
            <person name="Sutton G."/>
            <person name="Brettin T.S."/>
        </authorList>
    </citation>
    <scope>NUCLEOTIDE SEQUENCE [LARGE SCALE GENOMIC DNA]</scope>
    <source>
        <strain>657 / Type Ba4</strain>
    </source>
</reference>
<proteinExistence type="inferred from homology"/>
<feature type="chain" id="PRO_1000214822" description="ATP synthase subunit beta">
    <location>
        <begin position="1"/>
        <end position="463"/>
    </location>
</feature>
<feature type="binding site" evidence="1">
    <location>
        <begin position="151"/>
        <end position="158"/>
    </location>
    <ligand>
        <name>ATP</name>
        <dbReference type="ChEBI" id="CHEBI:30616"/>
    </ligand>
</feature>
<gene>
    <name evidence="1" type="primary">atpD</name>
    <name type="ordered locus">CLJ_B0195</name>
</gene>
<name>ATPB_CLOB6</name>
<sequence length="463" mass="50787">MSNLGKVIQIIGPIIDIKFDSENLPDLFNALEINAGDRKVIAEVEQHIGDDTIRAIAMEDTEGLKRGMEALDTGKSVSVPVGKEVLGRLFNVLGKPIDGAGEFISEESYPIHRPAPSFEEQSVEPEIFETGIKVIDLLAPYQKGGKIGLFGGAGVGKTVLIQELINNIAKEHGGLSVFTGVGERTREGNDLYYEMKESGVLEKTALVFGQMNEPPGARMRVALTGLTMSEYFRDQGQDVLLFIDNIFRFTQAGSEVSALLGRIPSAVGYQPTLATEMGALQERITSTKNGSITSVQAVYVPADDLTDPAPATTFAHLDATTVLSRSITELGIYPAVDPLESSSRMLDPRIIGEEHYEVAIKVKNILERYRELQDIIAILGIDELSEEDKLVVGRARKIQRFLSQPFTVAEQFTGMQGKYVPIKETVRGFKEILEGKHDNIPESAFLFQGTIEDVLKKAQQMEI</sequence>
<comment type="function">
    <text evidence="1">Produces ATP from ADP in the presence of a proton gradient across the membrane. The catalytic sites are hosted primarily by the beta subunits.</text>
</comment>
<comment type="catalytic activity">
    <reaction evidence="1">
        <text>ATP + H2O + 4 H(+)(in) = ADP + phosphate + 5 H(+)(out)</text>
        <dbReference type="Rhea" id="RHEA:57720"/>
        <dbReference type="ChEBI" id="CHEBI:15377"/>
        <dbReference type="ChEBI" id="CHEBI:15378"/>
        <dbReference type="ChEBI" id="CHEBI:30616"/>
        <dbReference type="ChEBI" id="CHEBI:43474"/>
        <dbReference type="ChEBI" id="CHEBI:456216"/>
        <dbReference type="EC" id="7.1.2.2"/>
    </reaction>
</comment>
<comment type="subunit">
    <text evidence="1">F-type ATPases have 2 components, CF(1) - the catalytic core - and CF(0) - the membrane proton channel. CF(1) has five subunits: alpha(3), beta(3), gamma(1), delta(1), epsilon(1). CF(0) has three main subunits: a(1), b(2) and c(9-12). The alpha and beta chains form an alternating ring which encloses part of the gamma chain. CF(1) is attached to CF(0) by a central stalk formed by the gamma and epsilon chains, while a peripheral stalk is formed by the delta and b chains.</text>
</comment>
<comment type="subcellular location">
    <subcellularLocation>
        <location evidence="1">Cell membrane</location>
        <topology evidence="1">Peripheral membrane protein</topology>
    </subcellularLocation>
</comment>
<comment type="similarity">
    <text evidence="1">Belongs to the ATPase alpha/beta chains family.</text>
</comment>
<accession>C3KYJ3</accession>
<evidence type="ECO:0000255" key="1">
    <source>
        <dbReference type="HAMAP-Rule" id="MF_01347"/>
    </source>
</evidence>